<name>VKT3C_ACTEQ</name>
<accession>P0DMJ2</accession>
<sequence length="57" mass="6411">YPANEGCLLPMKVGPCRAAWPSYYYNSKSEKCEEFTYGGCDANANNFQTEEECKKAC</sequence>
<feature type="chain" id="PRO_0000429349" description="PI-actitoxin-Aeq3c" evidence="3">
    <location>
        <begin position="1"/>
        <end position="57"/>
    </location>
</feature>
<feature type="domain" description="BPTI/Kunitz inhibitor" evidence="2">
    <location>
        <begin position="7"/>
        <end position="57"/>
    </location>
</feature>
<feature type="site" description="Reactive bond for trypsin" evidence="1">
    <location>
        <begin position="17"/>
        <end position="18"/>
    </location>
</feature>
<feature type="disulfide bond" evidence="2">
    <location>
        <begin position="7"/>
        <end position="57"/>
    </location>
</feature>
<feature type="disulfide bond" evidence="2">
    <location>
        <begin position="16"/>
        <end position="40"/>
    </location>
</feature>
<feature type="disulfide bond" evidence="2">
    <location>
        <begin position="32"/>
        <end position="53"/>
    </location>
</feature>
<reference key="1">
    <citation type="journal article" date="2008" name="Comp. Biochem. Physiol.">
        <title>Kunitz-type protease inhibitors from acrorhagi of three species of sea anemones.</title>
        <authorList>
            <person name="Minagawa S."/>
            <person name="Sugiyama M."/>
            <person name="Ishida M."/>
            <person name="Nagashima Y."/>
            <person name="Shiomi K."/>
        </authorList>
    </citation>
    <scope>PROTEIN SEQUENCE</scope>
    <scope>FUNCTION</scope>
    <scope>TISSUE SPECIFICITY</scope>
    <source>
        <tissue>Tentacle</tissue>
    </source>
</reference>
<reference key="2">
    <citation type="journal article" date="2012" name="Toxicon">
        <title>Development of a rational nomenclature for naming peptide and protein toxins from sea anemones.</title>
        <authorList>
            <person name="Oliveira J.S."/>
            <person name="Fuentes-Silva D."/>
            <person name="King G.F."/>
        </authorList>
    </citation>
    <scope>NOMENCLATURE</scope>
</reference>
<organism>
    <name type="scientific">Actinia equina</name>
    <name type="common">Beadlet anemone</name>
    <dbReference type="NCBI Taxonomy" id="6106"/>
    <lineage>
        <taxon>Eukaryota</taxon>
        <taxon>Metazoa</taxon>
        <taxon>Cnidaria</taxon>
        <taxon>Anthozoa</taxon>
        <taxon>Hexacorallia</taxon>
        <taxon>Actiniaria</taxon>
        <taxon>Actiniidae</taxon>
        <taxon>Actinia</taxon>
    </lineage>
</organism>
<keyword id="KW-0903">Direct protein sequencing</keyword>
<keyword id="KW-1015">Disulfide bond</keyword>
<keyword id="KW-0166">Nematocyst</keyword>
<keyword id="KW-0646">Protease inhibitor</keyword>
<keyword id="KW-0964">Secreted</keyword>
<keyword id="KW-0722">Serine protease inhibitor</keyword>
<protein>
    <recommendedName>
        <fullName evidence="5">PI-actitoxin-Aeq3c</fullName>
        <shortName evidence="5">PI-AITX-Aeq3c</shortName>
    </recommendedName>
    <alternativeName>
        <fullName evidence="4">Kunitz-type protease inhibitor AEAPI</fullName>
    </alternativeName>
</protein>
<comment type="function">
    <text evidence="3">Serine protease inhibitor that is strongly active against trypsin (700 IU/mg) and moderately active against plasmin.</text>
</comment>
<comment type="subcellular location">
    <subcellularLocation>
        <location evidence="6">Secreted</location>
    </subcellularLocation>
    <subcellularLocation>
        <location evidence="6">Nematocyst</location>
    </subcellularLocation>
</comment>
<comment type="tissue specificity">
    <text evidence="3">Expressed by acrorhagi.</text>
</comment>
<comment type="miscellaneous">
    <text evidence="7">Does not inhibit potassium channels (Kv), as well as metalloproteases, and cysteine proteases (papain and bromelain).</text>
</comment>
<comment type="similarity">
    <text evidence="6">Belongs to the venom Kunitz-type family. Sea anemone type 2 potassium channel toxin subfamily.</text>
</comment>
<dbReference type="SMR" id="P0DMJ2"/>
<dbReference type="GO" id="GO:0005615">
    <property type="term" value="C:extracellular space"/>
    <property type="evidence" value="ECO:0007669"/>
    <property type="project" value="TreeGrafter"/>
</dbReference>
<dbReference type="GO" id="GO:0042151">
    <property type="term" value="C:nematocyst"/>
    <property type="evidence" value="ECO:0007669"/>
    <property type="project" value="UniProtKB-SubCell"/>
</dbReference>
<dbReference type="GO" id="GO:0004867">
    <property type="term" value="F:serine-type endopeptidase inhibitor activity"/>
    <property type="evidence" value="ECO:0007669"/>
    <property type="project" value="UniProtKB-KW"/>
</dbReference>
<dbReference type="FunFam" id="4.10.410.10:FF:000021">
    <property type="entry name" value="Serine protease inhibitor, putative"/>
    <property type="match status" value="1"/>
</dbReference>
<dbReference type="Gene3D" id="4.10.410.10">
    <property type="entry name" value="Pancreatic trypsin inhibitor Kunitz domain"/>
    <property type="match status" value="1"/>
</dbReference>
<dbReference type="InterPro" id="IPR002223">
    <property type="entry name" value="Kunitz_BPTI"/>
</dbReference>
<dbReference type="InterPro" id="IPR036880">
    <property type="entry name" value="Kunitz_BPTI_sf"/>
</dbReference>
<dbReference type="InterPro" id="IPR020901">
    <property type="entry name" value="Prtase_inh_Kunz-CS"/>
</dbReference>
<dbReference type="InterPro" id="IPR050098">
    <property type="entry name" value="TFPI/VKTCI-like"/>
</dbReference>
<dbReference type="PANTHER" id="PTHR10083:SF374">
    <property type="entry name" value="BPTI_KUNITZ INHIBITOR DOMAIN-CONTAINING PROTEIN"/>
    <property type="match status" value="1"/>
</dbReference>
<dbReference type="PANTHER" id="PTHR10083">
    <property type="entry name" value="KUNITZ-TYPE PROTEASE INHIBITOR-RELATED"/>
    <property type="match status" value="1"/>
</dbReference>
<dbReference type="Pfam" id="PF00014">
    <property type="entry name" value="Kunitz_BPTI"/>
    <property type="match status" value="1"/>
</dbReference>
<dbReference type="PRINTS" id="PR00759">
    <property type="entry name" value="BASICPTASE"/>
</dbReference>
<dbReference type="SMART" id="SM00131">
    <property type="entry name" value="KU"/>
    <property type="match status" value="1"/>
</dbReference>
<dbReference type="SUPFAM" id="SSF57362">
    <property type="entry name" value="BPTI-like"/>
    <property type="match status" value="1"/>
</dbReference>
<dbReference type="PROSITE" id="PS00280">
    <property type="entry name" value="BPTI_KUNITZ_1"/>
    <property type="match status" value="1"/>
</dbReference>
<dbReference type="PROSITE" id="PS50279">
    <property type="entry name" value="BPTI_KUNITZ_2"/>
    <property type="match status" value="1"/>
</dbReference>
<evidence type="ECO:0000250" key="1"/>
<evidence type="ECO:0000255" key="2">
    <source>
        <dbReference type="PROSITE-ProRule" id="PRU00031"/>
    </source>
</evidence>
<evidence type="ECO:0000269" key="3">
    <source>
    </source>
</evidence>
<evidence type="ECO:0000303" key="4">
    <source>
    </source>
</evidence>
<evidence type="ECO:0000303" key="5">
    <source>
    </source>
</evidence>
<evidence type="ECO:0000305" key="6"/>
<evidence type="ECO:0000305" key="7">
    <source>
    </source>
</evidence>
<proteinExistence type="evidence at protein level"/>